<protein>
    <recommendedName>
        <fullName>Sensor protein GacS</fullName>
        <ecNumber>2.7.13.3</ecNumber>
    </recommendedName>
</protein>
<sequence length="907" mass="99196">MLLLTILPASLMAAMLGGYFTWMQLSELQSQLLQRGEMIAQDLAPLAANALGRKDKVLLSRIATQTLEQTDVRAVSFLDTDRTVLAHAGPTMISPSPIGSGSQLLSSTGTDATRYLLPVFGSQRHLTSPIIPAEADTLLGWVELEISHNGTLLRGYRSLFASLLLILTGLAFTATLAVRMSRTINGPMSQIKQAVSQLKDGNLETRLPPLGSRELDELASGINRMAATLQNAQEELQLSIDQATEDVRQNLETIEIQNIELDLARKEALEASRIKSEFLANMSHEIRTPLNGILGFTHLLQKSELTPRQFDYLGTIEKSADNLLSIINEILDFSKIEAGKLVLDNIPFNLRDLLQDTLTILAPAAHAKQLELVSLVYRDTPLALSGDPLRLRQILTNLVSNAIKFTREGTIVARAMLEDETEEHAQLRISVQDTGIGLSSQDVRALFQAFSQADNSLSRQPGGTGLGLVISKRLIEQMGGEIGVDSTPGEGSEFWISLKLPKAREDKEESLNIPLGGLRAAVLEHHDLARQALEHQLEDCGLQTIVFNNLENLLNGVTAAHETPAAIDLAVLGVTALEISPERLRQHIWDLENLNCKVMVLCPTTEHALFQLAVHDVYTQLQAKPACTRKLQKALSELIAPRAVRADIGPPLSSRAPRVLCVDDNPANLLLVQTLLEDMGAEVVAVEGGYAAVNAVQQEAFDLVLMDVQMPGMDGRQATEAIRAWEAERNQSSLPIVALTAHAMANEKRSLLQSGMDDYLTKPISERQLAQVVLKWTGLALRNPAPERQNEALEVHVGPLVLDHEEGLRLAAGKADLAADMLAMLLASLDADREAIRVARANQDVHALIERIHRLHGATRYCGVPQLRSACQRAETLLKQNAPHTEEALNDLDKAIIRLEAEARVMA</sequence>
<name>GACS_PSESY</name>
<proteinExistence type="inferred from homology"/>
<evidence type="ECO:0000250" key="1"/>
<evidence type="ECO:0000255" key="2"/>
<evidence type="ECO:0000255" key="3">
    <source>
        <dbReference type="PROSITE-ProRule" id="PRU00102"/>
    </source>
</evidence>
<evidence type="ECO:0000255" key="4">
    <source>
        <dbReference type="PROSITE-ProRule" id="PRU00107"/>
    </source>
</evidence>
<evidence type="ECO:0000255" key="5">
    <source>
        <dbReference type="PROSITE-ProRule" id="PRU00110"/>
    </source>
</evidence>
<evidence type="ECO:0000255" key="6">
    <source>
        <dbReference type="PROSITE-ProRule" id="PRU00169"/>
    </source>
</evidence>
<evidence type="ECO:0000305" key="7"/>
<dbReference type="EC" id="2.7.13.3"/>
<dbReference type="EMBL" id="M80477">
    <property type="protein sequence ID" value="AAA25877.1"/>
    <property type="molecule type" value="Genomic_DNA"/>
</dbReference>
<dbReference type="SMR" id="P48027"/>
<dbReference type="BRENDA" id="2.7.13.3">
    <property type="organism ID" value="5193"/>
</dbReference>
<dbReference type="GO" id="GO:0005886">
    <property type="term" value="C:plasma membrane"/>
    <property type="evidence" value="ECO:0007669"/>
    <property type="project" value="UniProtKB-SubCell"/>
</dbReference>
<dbReference type="GO" id="GO:0005524">
    <property type="term" value="F:ATP binding"/>
    <property type="evidence" value="ECO:0007669"/>
    <property type="project" value="UniProtKB-KW"/>
</dbReference>
<dbReference type="GO" id="GO:0000155">
    <property type="term" value="F:phosphorelay sensor kinase activity"/>
    <property type="evidence" value="ECO:0007669"/>
    <property type="project" value="InterPro"/>
</dbReference>
<dbReference type="CDD" id="cd06225">
    <property type="entry name" value="HAMP"/>
    <property type="match status" value="1"/>
</dbReference>
<dbReference type="CDD" id="cd16922">
    <property type="entry name" value="HATPase_EvgS-ArcB-TorS-like"/>
    <property type="match status" value="1"/>
</dbReference>
<dbReference type="CDD" id="cd00082">
    <property type="entry name" value="HisKA"/>
    <property type="match status" value="1"/>
</dbReference>
<dbReference type="CDD" id="cd17546">
    <property type="entry name" value="REC_hyHK_CKI1_RcsC-like"/>
    <property type="match status" value="1"/>
</dbReference>
<dbReference type="FunFam" id="1.10.287.130:FF:000003">
    <property type="entry name" value="Histidine kinase"/>
    <property type="match status" value="1"/>
</dbReference>
<dbReference type="FunFam" id="3.30.565.10:FF:000010">
    <property type="entry name" value="Sensor histidine kinase RcsC"/>
    <property type="match status" value="1"/>
</dbReference>
<dbReference type="Gene3D" id="1.10.287.130">
    <property type="match status" value="1"/>
</dbReference>
<dbReference type="Gene3D" id="3.40.50.2300">
    <property type="match status" value="1"/>
</dbReference>
<dbReference type="Gene3D" id="6.10.340.10">
    <property type="match status" value="1"/>
</dbReference>
<dbReference type="Gene3D" id="3.30.565.10">
    <property type="entry name" value="Histidine kinase-like ATPase, C-terminal domain"/>
    <property type="match status" value="1"/>
</dbReference>
<dbReference type="Gene3D" id="1.20.120.160">
    <property type="entry name" value="HPT domain"/>
    <property type="match status" value="1"/>
</dbReference>
<dbReference type="InterPro" id="IPR011006">
    <property type="entry name" value="CheY-like_superfamily"/>
</dbReference>
<dbReference type="InterPro" id="IPR003660">
    <property type="entry name" value="HAMP_dom"/>
</dbReference>
<dbReference type="InterPro" id="IPR036890">
    <property type="entry name" value="HATPase_C_sf"/>
</dbReference>
<dbReference type="InterPro" id="IPR005467">
    <property type="entry name" value="His_kinase_dom"/>
</dbReference>
<dbReference type="InterPro" id="IPR003661">
    <property type="entry name" value="HisK_dim/P_dom"/>
</dbReference>
<dbReference type="InterPro" id="IPR036097">
    <property type="entry name" value="HisK_dim/P_sf"/>
</dbReference>
<dbReference type="InterPro" id="IPR019247">
    <property type="entry name" value="Histidine_kinase_BarA_N"/>
</dbReference>
<dbReference type="InterPro" id="IPR036641">
    <property type="entry name" value="HPT_dom_sf"/>
</dbReference>
<dbReference type="InterPro" id="IPR004358">
    <property type="entry name" value="Sig_transdc_His_kin-like_C"/>
</dbReference>
<dbReference type="InterPro" id="IPR008207">
    <property type="entry name" value="Sig_transdc_His_kin_Hpt_dom"/>
</dbReference>
<dbReference type="InterPro" id="IPR001789">
    <property type="entry name" value="Sig_transdc_resp-reg_receiver"/>
</dbReference>
<dbReference type="PANTHER" id="PTHR45339">
    <property type="entry name" value="HYBRID SIGNAL TRANSDUCTION HISTIDINE KINASE J"/>
    <property type="match status" value="1"/>
</dbReference>
<dbReference type="PANTHER" id="PTHR45339:SF1">
    <property type="entry name" value="HYBRID SIGNAL TRANSDUCTION HISTIDINE KINASE J"/>
    <property type="match status" value="1"/>
</dbReference>
<dbReference type="Pfam" id="PF00672">
    <property type="entry name" value="HAMP"/>
    <property type="match status" value="1"/>
</dbReference>
<dbReference type="Pfam" id="PF02518">
    <property type="entry name" value="HATPase_c"/>
    <property type="match status" value="1"/>
</dbReference>
<dbReference type="Pfam" id="PF00512">
    <property type="entry name" value="HisKA"/>
    <property type="match status" value="1"/>
</dbReference>
<dbReference type="Pfam" id="PF01627">
    <property type="entry name" value="Hpt"/>
    <property type="match status" value="1"/>
</dbReference>
<dbReference type="Pfam" id="PF00072">
    <property type="entry name" value="Response_reg"/>
    <property type="match status" value="1"/>
</dbReference>
<dbReference type="Pfam" id="PF09984">
    <property type="entry name" value="sCache_4"/>
    <property type="match status" value="1"/>
</dbReference>
<dbReference type="PRINTS" id="PR00344">
    <property type="entry name" value="BCTRLSENSOR"/>
</dbReference>
<dbReference type="SMART" id="SM00304">
    <property type="entry name" value="HAMP"/>
    <property type="match status" value="1"/>
</dbReference>
<dbReference type="SMART" id="SM00387">
    <property type="entry name" value="HATPase_c"/>
    <property type="match status" value="1"/>
</dbReference>
<dbReference type="SMART" id="SM00388">
    <property type="entry name" value="HisKA"/>
    <property type="match status" value="1"/>
</dbReference>
<dbReference type="SMART" id="SM00073">
    <property type="entry name" value="HPT"/>
    <property type="match status" value="1"/>
</dbReference>
<dbReference type="SMART" id="SM00448">
    <property type="entry name" value="REC"/>
    <property type="match status" value="1"/>
</dbReference>
<dbReference type="SUPFAM" id="SSF55874">
    <property type="entry name" value="ATPase domain of HSP90 chaperone/DNA topoisomerase II/histidine kinase"/>
    <property type="match status" value="1"/>
</dbReference>
<dbReference type="SUPFAM" id="SSF52172">
    <property type="entry name" value="CheY-like"/>
    <property type="match status" value="2"/>
</dbReference>
<dbReference type="SUPFAM" id="SSF158472">
    <property type="entry name" value="HAMP domain-like"/>
    <property type="match status" value="1"/>
</dbReference>
<dbReference type="SUPFAM" id="SSF47226">
    <property type="entry name" value="Histidine-containing phosphotransfer domain, HPT domain"/>
    <property type="match status" value="1"/>
</dbReference>
<dbReference type="SUPFAM" id="SSF47384">
    <property type="entry name" value="Homodimeric domain of signal transducing histidine kinase"/>
    <property type="match status" value="1"/>
</dbReference>
<dbReference type="PROSITE" id="PS50885">
    <property type="entry name" value="HAMP"/>
    <property type="match status" value="1"/>
</dbReference>
<dbReference type="PROSITE" id="PS50109">
    <property type="entry name" value="HIS_KIN"/>
    <property type="match status" value="1"/>
</dbReference>
<dbReference type="PROSITE" id="PS50894">
    <property type="entry name" value="HPT"/>
    <property type="match status" value="1"/>
</dbReference>
<dbReference type="PROSITE" id="PS50110">
    <property type="entry name" value="RESPONSE_REGULATORY"/>
    <property type="match status" value="1"/>
</dbReference>
<feature type="chain" id="PRO_0000074767" description="Sensor protein GacS">
    <location>
        <begin position="1"/>
        <end position="907"/>
    </location>
</feature>
<feature type="transmembrane region" description="Helical" evidence="2">
    <location>
        <begin position="9"/>
        <end position="25"/>
    </location>
</feature>
<feature type="transmembrane region" description="Helical" evidence="2">
    <location>
        <begin position="84"/>
        <end position="101"/>
    </location>
</feature>
<feature type="transmembrane region" description="Helical" evidence="2">
    <location>
        <begin position="159"/>
        <end position="178"/>
    </location>
</feature>
<feature type="domain" description="HAMP" evidence="3">
    <location>
        <begin position="182"/>
        <end position="234"/>
    </location>
</feature>
<feature type="domain" description="Histidine kinase" evidence="4">
    <location>
        <begin position="281"/>
        <end position="502"/>
    </location>
</feature>
<feature type="domain" description="Response regulatory" evidence="6">
    <location>
        <begin position="658"/>
        <end position="777"/>
    </location>
</feature>
<feature type="domain" description="HPt" evidence="5">
    <location>
        <begin position="814"/>
        <end position="907"/>
    </location>
</feature>
<feature type="modified residue" description="Phosphohistidine; by autocatalysis" evidence="4">
    <location>
        <position position="284"/>
    </location>
</feature>
<feature type="modified residue" description="4-aspartylphosphate" evidence="6">
    <location>
        <position position="707"/>
    </location>
</feature>
<feature type="modified residue" description="Phosphohistidine" evidence="5">
    <location>
        <position position="853"/>
    </location>
</feature>
<accession>P48027</accession>
<gene>
    <name type="primary">gacS</name>
    <name type="synonym">lemA</name>
</gene>
<comment type="function">
    <text>Forms part of a two-component regulatory system GacA/GacS(LemA). May be involved in lesion formation, swarming and in the production of extracellular protease, syringomycin and N-acyl-L-homoserine lactone (acyl-HSL). Required for pathogenicity on bean.</text>
</comment>
<comment type="catalytic activity">
    <reaction>
        <text>ATP + protein L-histidine = ADP + protein N-phospho-L-histidine.</text>
        <dbReference type="EC" id="2.7.13.3"/>
    </reaction>
</comment>
<comment type="subcellular location">
    <subcellularLocation>
        <location evidence="7">Cell inner membrane</location>
        <topology evidence="7">Multi-pass membrane protein</topology>
    </subcellularLocation>
</comment>
<comment type="PTM">
    <text evidence="1">Activation requires a sequential transfer of a phosphate group from a His in the primary transmitter domain, to an Asp in the receiver domain and to a His in the secondary transmitter domain.</text>
</comment>
<organism>
    <name type="scientific">Pseudomonas syringae pv. syringae</name>
    <dbReference type="NCBI Taxonomy" id="321"/>
    <lineage>
        <taxon>Bacteria</taxon>
        <taxon>Pseudomonadati</taxon>
        <taxon>Pseudomonadota</taxon>
        <taxon>Gammaproteobacteria</taxon>
        <taxon>Pseudomonadales</taxon>
        <taxon>Pseudomonadaceae</taxon>
        <taxon>Pseudomonas</taxon>
        <taxon>Pseudomonas syringae</taxon>
    </lineage>
</organism>
<keyword id="KW-0067">ATP-binding</keyword>
<keyword id="KW-0997">Cell inner membrane</keyword>
<keyword id="KW-1003">Cell membrane</keyword>
<keyword id="KW-0418">Kinase</keyword>
<keyword id="KW-0472">Membrane</keyword>
<keyword id="KW-0547">Nucleotide-binding</keyword>
<keyword id="KW-0597">Phosphoprotein</keyword>
<keyword id="KW-0808">Transferase</keyword>
<keyword id="KW-0812">Transmembrane</keyword>
<keyword id="KW-1133">Transmembrane helix</keyword>
<keyword id="KW-0902">Two-component regulatory system</keyword>
<reference key="1">
    <citation type="journal article" date="1992" name="J. Bacteriol.">
        <title>The lemA gene required for pathogenicity of Pseudomonas syringae pv. syringae on bean is a member of a family of two-component regulators.</title>
        <authorList>
            <person name="Hrabak E.M."/>
            <person name="Willis D.K."/>
        </authorList>
    </citation>
    <scope>NUCLEOTIDE SEQUENCE [GENOMIC DNA]</scope>
</reference>